<gene>
    <name type="primary">gadB</name>
    <name type="ordered locus">lin2463</name>
</gene>
<keyword id="KW-0210">Decarboxylase</keyword>
<keyword id="KW-0456">Lyase</keyword>
<keyword id="KW-0663">Pyridoxal phosphate</keyword>
<feature type="chain" id="PRO_0000146989" description="Glutamate decarboxylase beta">
    <location>
        <begin position="1"/>
        <end position="464"/>
    </location>
</feature>
<feature type="modified residue" description="N6-(pyridoxal phosphate)lysine" evidence="1">
    <location>
        <position position="275"/>
    </location>
</feature>
<proteinExistence type="inferred from homology"/>
<sequence length="464" mass="53600">MLYSKENKESYLEPVFGSSAEDRDIPKYTLAKEPLEPRIAYRLVKDELLDEGSARQNLATFCQTYMEDEATKLMSETLEKNAIDKSEYPRTAELENRCVNIIADLWHAPKDQKFMGTSTIGSSEACMLGGMAMKFAWRKRAEKLGLDIYAQKPNLVISSGYQVCWEKFCVYWDIDMRVVPMDKDHMQLNTDQVLDYVDEYTIGVVGILGITYTGRYDDIYALNEKLEEYNSKTDYKVYIHVDAASGGFFTPFVEPDIIWDFRLKNVISINTSGHKYGLVYPGIGWVLWKDESYLPEELIFKVSYLGGEMPTMQINFSRSASHIIGQYYNFLRYGFEGYRTIHQKTSDVAQYLAHAVEQTGYFDIYNDGSHLPIVCYKLKDDANVKWTLYDLADRLQMRGWQVPAYPLPKNLENIIIQRYVCRADLGFNMAEEFIQDFQASIQELNNAHILFHDTQQSGVHGFTH</sequence>
<organism>
    <name type="scientific">Listeria innocua serovar 6a (strain ATCC BAA-680 / CLIP 11262)</name>
    <dbReference type="NCBI Taxonomy" id="272626"/>
    <lineage>
        <taxon>Bacteria</taxon>
        <taxon>Bacillati</taxon>
        <taxon>Bacillota</taxon>
        <taxon>Bacilli</taxon>
        <taxon>Bacillales</taxon>
        <taxon>Listeriaceae</taxon>
        <taxon>Listeria</taxon>
    </lineage>
</organism>
<protein>
    <recommendedName>
        <fullName>Glutamate decarboxylase beta</fullName>
        <shortName>GAD-beta</shortName>
        <ecNumber>4.1.1.15</ecNumber>
    </recommendedName>
</protein>
<reference key="1">
    <citation type="journal article" date="2001" name="Science">
        <title>Comparative genomics of Listeria species.</title>
        <authorList>
            <person name="Glaser P."/>
            <person name="Frangeul L."/>
            <person name="Buchrieser C."/>
            <person name="Rusniok C."/>
            <person name="Amend A."/>
            <person name="Baquero F."/>
            <person name="Berche P."/>
            <person name="Bloecker H."/>
            <person name="Brandt P."/>
            <person name="Chakraborty T."/>
            <person name="Charbit A."/>
            <person name="Chetouani F."/>
            <person name="Couve E."/>
            <person name="de Daruvar A."/>
            <person name="Dehoux P."/>
            <person name="Domann E."/>
            <person name="Dominguez-Bernal G."/>
            <person name="Duchaud E."/>
            <person name="Durant L."/>
            <person name="Dussurget O."/>
            <person name="Entian K.-D."/>
            <person name="Fsihi H."/>
            <person name="Garcia-del Portillo F."/>
            <person name="Garrido P."/>
            <person name="Gautier L."/>
            <person name="Goebel W."/>
            <person name="Gomez-Lopez N."/>
            <person name="Hain T."/>
            <person name="Hauf J."/>
            <person name="Jackson D."/>
            <person name="Jones L.-M."/>
            <person name="Kaerst U."/>
            <person name="Kreft J."/>
            <person name="Kuhn M."/>
            <person name="Kunst F."/>
            <person name="Kurapkat G."/>
            <person name="Madueno E."/>
            <person name="Maitournam A."/>
            <person name="Mata Vicente J."/>
            <person name="Ng E."/>
            <person name="Nedjari H."/>
            <person name="Nordsiek G."/>
            <person name="Novella S."/>
            <person name="de Pablos B."/>
            <person name="Perez-Diaz J.-C."/>
            <person name="Purcell R."/>
            <person name="Remmel B."/>
            <person name="Rose M."/>
            <person name="Schlueter T."/>
            <person name="Simoes N."/>
            <person name="Tierrez A."/>
            <person name="Vazquez-Boland J.-A."/>
            <person name="Voss H."/>
            <person name="Wehland J."/>
            <person name="Cossart P."/>
        </authorList>
    </citation>
    <scope>NUCLEOTIDE SEQUENCE [LARGE SCALE GENOMIC DNA]</scope>
    <source>
        <strain>ATCC BAA-680 / CLIP 11262</strain>
    </source>
</reference>
<accession>Q928R9</accession>
<name>DCEB_LISIN</name>
<evidence type="ECO:0000250" key="1"/>
<evidence type="ECO:0000305" key="2"/>
<comment type="function">
    <text evidence="1">Converts internalized glutamate to GABA and increases the internal pH. Involved in glutamate-dependent acid resistance in gastric fluid (By similarity).</text>
</comment>
<comment type="catalytic activity">
    <reaction>
        <text>L-glutamate + H(+) = 4-aminobutanoate + CO2</text>
        <dbReference type="Rhea" id="RHEA:17785"/>
        <dbReference type="ChEBI" id="CHEBI:15378"/>
        <dbReference type="ChEBI" id="CHEBI:16526"/>
        <dbReference type="ChEBI" id="CHEBI:29985"/>
        <dbReference type="ChEBI" id="CHEBI:59888"/>
        <dbReference type="EC" id="4.1.1.15"/>
    </reaction>
</comment>
<comment type="cofactor">
    <cofactor evidence="1">
        <name>pyridoxal 5'-phosphate</name>
        <dbReference type="ChEBI" id="CHEBI:597326"/>
    </cofactor>
</comment>
<comment type="similarity">
    <text evidence="2">Belongs to the group II decarboxylase family.</text>
</comment>
<dbReference type="EC" id="4.1.1.15"/>
<dbReference type="EMBL" id="AL596172">
    <property type="protein sequence ID" value="CAC97690.1"/>
    <property type="molecule type" value="Genomic_DNA"/>
</dbReference>
<dbReference type="PIR" id="AB1740">
    <property type="entry name" value="AB1740"/>
</dbReference>
<dbReference type="RefSeq" id="WP_010991206.1">
    <property type="nucleotide sequence ID" value="NC_003212.1"/>
</dbReference>
<dbReference type="SMR" id="Q928R9"/>
<dbReference type="STRING" id="272626.gene:17566824"/>
<dbReference type="GeneID" id="93235754"/>
<dbReference type="KEGG" id="lin:lin2463"/>
<dbReference type="eggNOG" id="COG0076">
    <property type="taxonomic scope" value="Bacteria"/>
</dbReference>
<dbReference type="HOGENOM" id="CLU_019582_2_1_9"/>
<dbReference type="OrthoDB" id="9803665at2"/>
<dbReference type="Proteomes" id="UP000002513">
    <property type="component" value="Chromosome"/>
</dbReference>
<dbReference type="GO" id="GO:0005829">
    <property type="term" value="C:cytosol"/>
    <property type="evidence" value="ECO:0007669"/>
    <property type="project" value="TreeGrafter"/>
</dbReference>
<dbReference type="GO" id="GO:0004058">
    <property type="term" value="F:aromatic-L-amino-acid decarboxylase activity"/>
    <property type="evidence" value="ECO:0007669"/>
    <property type="project" value="UniProtKB-ARBA"/>
</dbReference>
<dbReference type="GO" id="GO:0004351">
    <property type="term" value="F:glutamate decarboxylase activity"/>
    <property type="evidence" value="ECO:0007669"/>
    <property type="project" value="UniProtKB-EC"/>
</dbReference>
<dbReference type="GO" id="GO:0030170">
    <property type="term" value="F:pyridoxal phosphate binding"/>
    <property type="evidence" value="ECO:0007669"/>
    <property type="project" value="InterPro"/>
</dbReference>
<dbReference type="GO" id="GO:0006538">
    <property type="term" value="P:glutamate catabolic process"/>
    <property type="evidence" value="ECO:0007669"/>
    <property type="project" value="TreeGrafter"/>
</dbReference>
<dbReference type="CDD" id="cd06450">
    <property type="entry name" value="DOPA_deC_like"/>
    <property type="match status" value="1"/>
</dbReference>
<dbReference type="FunFam" id="3.40.640.10:FF:000017">
    <property type="entry name" value="Glutamate decarboxylase"/>
    <property type="match status" value="1"/>
</dbReference>
<dbReference type="FunFam" id="3.90.1150.160:FF:000003">
    <property type="entry name" value="Glutamate decarboxylase"/>
    <property type="match status" value="1"/>
</dbReference>
<dbReference type="FunFam" id="4.10.280.50:FF:000001">
    <property type="entry name" value="Glutamate decarboxylase"/>
    <property type="match status" value="1"/>
</dbReference>
<dbReference type="Gene3D" id="3.90.1150.160">
    <property type="match status" value="1"/>
</dbReference>
<dbReference type="Gene3D" id="4.10.280.50">
    <property type="match status" value="1"/>
</dbReference>
<dbReference type="Gene3D" id="3.40.640.10">
    <property type="entry name" value="Type I PLP-dependent aspartate aminotransferase-like (Major domain)"/>
    <property type="match status" value="1"/>
</dbReference>
<dbReference type="InterPro" id="IPR010107">
    <property type="entry name" value="Glutamate_decarboxylase"/>
</dbReference>
<dbReference type="InterPro" id="IPR002129">
    <property type="entry name" value="PyrdxlP-dep_de-COase"/>
</dbReference>
<dbReference type="InterPro" id="IPR015424">
    <property type="entry name" value="PyrdxlP-dep_Trfase"/>
</dbReference>
<dbReference type="InterPro" id="IPR015421">
    <property type="entry name" value="PyrdxlP-dep_Trfase_major"/>
</dbReference>
<dbReference type="NCBIfam" id="TIGR01788">
    <property type="entry name" value="Glu-decarb-GAD"/>
    <property type="match status" value="1"/>
</dbReference>
<dbReference type="PANTHER" id="PTHR43321">
    <property type="entry name" value="GLUTAMATE DECARBOXYLASE"/>
    <property type="match status" value="1"/>
</dbReference>
<dbReference type="PANTHER" id="PTHR43321:SF3">
    <property type="entry name" value="GLUTAMATE DECARBOXYLASE"/>
    <property type="match status" value="1"/>
</dbReference>
<dbReference type="Pfam" id="PF00282">
    <property type="entry name" value="Pyridoxal_deC"/>
    <property type="match status" value="1"/>
</dbReference>
<dbReference type="SUPFAM" id="SSF53383">
    <property type="entry name" value="PLP-dependent transferases"/>
    <property type="match status" value="1"/>
</dbReference>